<comment type="function">
    <text evidence="1">Catalyzes the final one or two reductions in tetra-hydrobiopterin biosynthesis to form 5,6,7,8-tetrahydrobiopterin.</text>
</comment>
<comment type="catalytic activity">
    <reaction>
        <text>L-erythro-7,8-dihydrobiopterin + NADP(+) = L-sepiapterin + NADPH + H(+)</text>
        <dbReference type="Rhea" id="RHEA:18953"/>
        <dbReference type="ChEBI" id="CHEBI:15378"/>
        <dbReference type="ChEBI" id="CHEBI:43029"/>
        <dbReference type="ChEBI" id="CHEBI:57783"/>
        <dbReference type="ChEBI" id="CHEBI:58349"/>
        <dbReference type="ChEBI" id="CHEBI:194527"/>
        <dbReference type="EC" id="1.1.1.153"/>
    </reaction>
</comment>
<comment type="catalytic activity">
    <reaction>
        <text>(6R)-L-erythro-5,6,7,8-tetrahydrobiopterin + 2 NADP(+) = 6-pyruvoyl-5,6,7,8-tetrahydropterin + 2 NADPH + 2 H(+)</text>
        <dbReference type="Rhea" id="RHEA:32627"/>
        <dbReference type="ChEBI" id="CHEBI:15378"/>
        <dbReference type="ChEBI" id="CHEBI:57783"/>
        <dbReference type="ChEBI" id="CHEBI:58349"/>
        <dbReference type="ChEBI" id="CHEBI:59560"/>
        <dbReference type="ChEBI" id="CHEBI:136564"/>
        <dbReference type="EC" id="1.1.1.153"/>
    </reaction>
</comment>
<comment type="subunit">
    <text evidence="1">Homodimer.</text>
</comment>
<comment type="subcellular location">
    <subcellularLocation>
        <location evidence="1">Cytoplasm</location>
    </subcellularLocation>
</comment>
<comment type="similarity">
    <text evidence="2">Belongs to the sepiapterin reductase family.</text>
</comment>
<sequence length="263" mass="28706">MTAARAGALGSVLCVLTGASRGFGRTLAHELCPRVLPGSTLLLVSRTEEALKGLAEELGHEFPGVRVRWAAADLSTTEGVSATVRAARELQAGTAHRLLIINNAGSIGDVSKMFVDFSAPEEVTEYMKFNVSSPLCLTASLLKTFPRRPDLQRLVVNVSSLAALQPYKSWVLYCSGKAARDMMFRVLAEEEDDVRVLSYAPGPLDTDMHEVACTQTADPELRRAIMDRKEKGNMVDIRVSANKMLDLLEADAYKSGDHIDFYD</sequence>
<gene>
    <name type="primary">spr</name>
</gene>
<keyword id="KW-0963">Cytoplasm</keyword>
<keyword id="KW-0521">NADP</keyword>
<keyword id="KW-0560">Oxidoreductase</keyword>
<keyword id="KW-1185">Reference proteome</keyword>
<protein>
    <recommendedName>
        <fullName>Sepiapterin reductase</fullName>
        <shortName>SPR</shortName>
        <ecNumber>1.1.1.153</ecNumber>
    </recommendedName>
</protein>
<reference key="1">
    <citation type="submission" date="2003-01" db="EMBL/GenBank/DDBJ databases">
        <authorList>
            <consortium name="NIH - Xenopus Gene Collection (XGC) project"/>
        </authorList>
    </citation>
    <scope>NUCLEOTIDE SEQUENCE [LARGE SCALE MRNA]</scope>
    <source>
        <tissue>Embryo</tissue>
    </source>
</reference>
<accession>Q7ZY31</accession>
<proteinExistence type="evidence at transcript level"/>
<dbReference type="EC" id="1.1.1.153"/>
<dbReference type="EMBL" id="BC043999">
    <property type="protein sequence ID" value="AAH43999.1"/>
    <property type="molecule type" value="mRNA"/>
</dbReference>
<dbReference type="RefSeq" id="NP_001080581.1">
    <property type="nucleotide sequence ID" value="NM_001087112.1"/>
</dbReference>
<dbReference type="SMR" id="Q7ZY31"/>
<dbReference type="DNASU" id="380273"/>
<dbReference type="GeneID" id="380273"/>
<dbReference type="KEGG" id="xla:380273"/>
<dbReference type="AGR" id="Xenbase:XB-GENE-6253916"/>
<dbReference type="CTD" id="380273"/>
<dbReference type="OrthoDB" id="153074at2759"/>
<dbReference type="Proteomes" id="UP000186698">
    <property type="component" value="Chromosome 1L"/>
</dbReference>
<dbReference type="Bgee" id="380273">
    <property type="expression patterns" value="Expressed in kidney and 20 other cell types or tissues"/>
</dbReference>
<dbReference type="GO" id="GO:0005737">
    <property type="term" value="C:cytoplasm"/>
    <property type="evidence" value="ECO:0007669"/>
    <property type="project" value="UniProtKB-SubCell"/>
</dbReference>
<dbReference type="GO" id="GO:0004757">
    <property type="term" value="F:sepiapterin reductase (NADP+) activity"/>
    <property type="evidence" value="ECO:0000250"/>
    <property type="project" value="UniProtKB"/>
</dbReference>
<dbReference type="GO" id="GO:0006729">
    <property type="term" value="P:tetrahydrobiopterin biosynthetic process"/>
    <property type="evidence" value="ECO:0000318"/>
    <property type="project" value="GO_Central"/>
</dbReference>
<dbReference type="CDD" id="cd05367">
    <property type="entry name" value="SPR-like_SDR_c"/>
    <property type="match status" value="1"/>
</dbReference>
<dbReference type="FunFam" id="3.40.50.720:FF:000259">
    <property type="entry name" value="Sepiapterin reductase"/>
    <property type="match status" value="1"/>
</dbReference>
<dbReference type="Gene3D" id="3.40.50.720">
    <property type="entry name" value="NAD(P)-binding Rossmann-like Domain"/>
    <property type="match status" value="1"/>
</dbReference>
<dbReference type="InterPro" id="IPR051721">
    <property type="entry name" value="Biopterin_syn/organic_redct"/>
</dbReference>
<dbReference type="InterPro" id="IPR036291">
    <property type="entry name" value="NAD(P)-bd_dom_sf"/>
</dbReference>
<dbReference type="InterPro" id="IPR002347">
    <property type="entry name" value="SDR_fam"/>
</dbReference>
<dbReference type="InterPro" id="IPR006393">
    <property type="entry name" value="Sepiapterin_red"/>
</dbReference>
<dbReference type="NCBIfam" id="TIGR01500">
    <property type="entry name" value="sepiapter_red"/>
    <property type="match status" value="1"/>
</dbReference>
<dbReference type="PANTHER" id="PTHR44085">
    <property type="entry name" value="SEPIAPTERIN REDUCTASE"/>
    <property type="match status" value="1"/>
</dbReference>
<dbReference type="PANTHER" id="PTHR44085:SF2">
    <property type="entry name" value="SEPIAPTERIN REDUCTASE"/>
    <property type="match status" value="1"/>
</dbReference>
<dbReference type="Pfam" id="PF00106">
    <property type="entry name" value="adh_short"/>
    <property type="match status" value="1"/>
</dbReference>
<dbReference type="PRINTS" id="PR00081">
    <property type="entry name" value="GDHRDH"/>
</dbReference>
<dbReference type="SUPFAM" id="SSF51735">
    <property type="entry name" value="NAD(P)-binding Rossmann-fold domains"/>
    <property type="match status" value="1"/>
</dbReference>
<feature type="chain" id="PRO_0000327643" description="Sepiapterin reductase">
    <location>
        <begin position="1"/>
        <end position="263"/>
    </location>
</feature>
<feature type="binding site" evidence="1">
    <location>
        <begin position="18"/>
        <end position="24"/>
    </location>
    <ligand>
        <name>NADP(+)</name>
        <dbReference type="ChEBI" id="CHEBI:58349"/>
    </ligand>
</feature>
<feature type="binding site" evidence="1">
    <location>
        <begin position="46"/>
        <end position="47"/>
    </location>
    <ligand>
        <name>NADP(+)</name>
        <dbReference type="ChEBI" id="CHEBI:58349"/>
    </ligand>
</feature>
<feature type="binding site" evidence="1">
    <location>
        <begin position="73"/>
        <end position="74"/>
    </location>
    <ligand>
        <name>NADP(+)</name>
        <dbReference type="ChEBI" id="CHEBI:58349"/>
    </ligand>
</feature>
<feature type="binding site" evidence="1">
    <location>
        <begin position="160"/>
        <end position="161"/>
    </location>
    <ligand>
        <name>substrate</name>
    </ligand>
</feature>
<feature type="binding site" evidence="1">
    <location>
        <position position="173"/>
    </location>
    <ligand>
        <name>substrate</name>
    </ligand>
</feature>
<feature type="binding site" evidence="1">
    <location>
        <position position="177"/>
    </location>
    <ligand>
        <name>NADP(+)</name>
        <dbReference type="ChEBI" id="CHEBI:58349"/>
    </ligand>
</feature>
<feature type="binding site" evidence="1">
    <location>
        <position position="202"/>
    </location>
    <ligand>
        <name>substrate</name>
    </ligand>
</feature>
<feature type="binding site" evidence="1">
    <location>
        <begin position="204"/>
        <end position="209"/>
    </location>
    <ligand>
        <name>NADP(+)</name>
        <dbReference type="ChEBI" id="CHEBI:58349"/>
    </ligand>
</feature>
<feature type="binding site" evidence="1">
    <location>
        <position position="260"/>
    </location>
    <ligand>
        <name>substrate</name>
    </ligand>
</feature>
<evidence type="ECO:0000250" key="1"/>
<evidence type="ECO:0000305" key="2"/>
<name>SPRE_XENLA</name>
<organism>
    <name type="scientific">Xenopus laevis</name>
    <name type="common">African clawed frog</name>
    <dbReference type="NCBI Taxonomy" id="8355"/>
    <lineage>
        <taxon>Eukaryota</taxon>
        <taxon>Metazoa</taxon>
        <taxon>Chordata</taxon>
        <taxon>Craniata</taxon>
        <taxon>Vertebrata</taxon>
        <taxon>Euteleostomi</taxon>
        <taxon>Amphibia</taxon>
        <taxon>Batrachia</taxon>
        <taxon>Anura</taxon>
        <taxon>Pipoidea</taxon>
        <taxon>Pipidae</taxon>
        <taxon>Xenopodinae</taxon>
        <taxon>Xenopus</taxon>
        <taxon>Xenopus</taxon>
    </lineage>
</organism>